<comment type="function">
    <text evidence="1">One of the primary rRNA binding proteins, it binds directly near the 3'-end of the 23S rRNA, where it nucleates assembly of the 50S subunit.</text>
</comment>
<comment type="subunit">
    <text evidence="1">Part of the 50S ribosomal subunit. Forms a cluster with proteins L14 and L19.</text>
</comment>
<comment type="similarity">
    <text evidence="1">Belongs to the universal ribosomal protein uL3 family.</text>
</comment>
<evidence type="ECO:0000255" key="1">
    <source>
        <dbReference type="HAMAP-Rule" id="MF_01325"/>
    </source>
</evidence>
<evidence type="ECO:0000305" key="2"/>
<reference key="1">
    <citation type="journal article" date="2002" name="J. Bacteriol.">
        <title>Whole-genome comparison of Mycobacterium tuberculosis clinical and laboratory strains.</title>
        <authorList>
            <person name="Fleischmann R.D."/>
            <person name="Alland D."/>
            <person name="Eisen J.A."/>
            <person name="Carpenter L."/>
            <person name="White O."/>
            <person name="Peterson J.D."/>
            <person name="DeBoy R.T."/>
            <person name="Dodson R.J."/>
            <person name="Gwinn M.L."/>
            <person name="Haft D.H."/>
            <person name="Hickey E.K."/>
            <person name="Kolonay J.F."/>
            <person name="Nelson W.C."/>
            <person name="Umayam L.A."/>
            <person name="Ermolaeva M.D."/>
            <person name="Salzberg S.L."/>
            <person name="Delcher A."/>
            <person name="Utterback T.R."/>
            <person name="Weidman J.F."/>
            <person name="Khouri H.M."/>
            <person name="Gill J."/>
            <person name="Mikula A."/>
            <person name="Bishai W."/>
            <person name="Jacobs W.R. Jr."/>
            <person name="Venter J.C."/>
            <person name="Fraser C.M."/>
        </authorList>
    </citation>
    <scope>NUCLEOTIDE SEQUENCE [LARGE SCALE GENOMIC DNA]</scope>
    <source>
        <strain>CDC 1551 / Oshkosh</strain>
    </source>
</reference>
<proteinExistence type="inferred from homology"/>
<dbReference type="EMBL" id="AE000516">
    <property type="protein sequence ID" value="AAK44959.1"/>
    <property type="molecule type" value="Genomic_DNA"/>
</dbReference>
<dbReference type="PIR" id="H70641">
    <property type="entry name" value="H70641"/>
</dbReference>
<dbReference type="RefSeq" id="WP_003403579.1">
    <property type="nucleotide sequence ID" value="NZ_KK341227.1"/>
</dbReference>
<dbReference type="SMR" id="P9WH86"/>
<dbReference type="GeneID" id="45424666"/>
<dbReference type="KEGG" id="mtc:MT0728"/>
<dbReference type="PATRIC" id="fig|83331.31.peg.778"/>
<dbReference type="HOGENOM" id="CLU_044142_4_1_11"/>
<dbReference type="Proteomes" id="UP000001020">
    <property type="component" value="Chromosome"/>
</dbReference>
<dbReference type="GO" id="GO:0022625">
    <property type="term" value="C:cytosolic large ribosomal subunit"/>
    <property type="evidence" value="ECO:0007669"/>
    <property type="project" value="TreeGrafter"/>
</dbReference>
<dbReference type="GO" id="GO:0019843">
    <property type="term" value="F:rRNA binding"/>
    <property type="evidence" value="ECO:0007669"/>
    <property type="project" value="UniProtKB-UniRule"/>
</dbReference>
<dbReference type="GO" id="GO:0003735">
    <property type="term" value="F:structural constituent of ribosome"/>
    <property type="evidence" value="ECO:0007669"/>
    <property type="project" value="InterPro"/>
</dbReference>
<dbReference type="GO" id="GO:0006412">
    <property type="term" value="P:translation"/>
    <property type="evidence" value="ECO:0007669"/>
    <property type="project" value="UniProtKB-UniRule"/>
</dbReference>
<dbReference type="FunFam" id="2.40.30.10:FF:000004">
    <property type="entry name" value="50S ribosomal protein L3"/>
    <property type="match status" value="1"/>
</dbReference>
<dbReference type="FunFam" id="3.30.160.810:FF:000001">
    <property type="entry name" value="50S ribosomal protein L3"/>
    <property type="match status" value="1"/>
</dbReference>
<dbReference type="Gene3D" id="3.30.160.810">
    <property type="match status" value="1"/>
</dbReference>
<dbReference type="Gene3D" id="2.40.30.10">
    <property type="entry name" value="Translation factors"/>
    <property type="match status" value="1"/>
</dbReference>
<dbReference type="HAMAP" id="MF_01325_B">
    <property type="entry name" value="Ribosomal_uL3_B"/>
    <property type="match status" value="1"/>
</dbReference>
<dbReference type="InterPro" id="IPR000597">
    <property type="entry name" value="Ribosomal_uL3"/>
</dbReference>
<dbReference type="InterPro" id="IPR019927">
    <property type="entry name" value="Ribosomal_uL3_bac/org-type"/>
</dbReference>
<dbReference type="InterPro" id="IPR019926">
    <property type="entry name" value="Ribosomal_uL3_CS"/>
</dbReference>
<dbReference type="InterPro" id="IPR009000">
    <property type="entry name" value="Transl_B-barrel_sf"/>
</dbReference>
<dbReference type="NCBIfam" id="TIGR03625">
    <property type="entry name" value="L3_bact"/>
    <property type="match status" value="1"/>
</dbReference>
<dbReference type="PANTHER" id="PTHR11229">
    <property type="entry name" value="50S RIBOSOMAL PROTEIN L3"/>
    <property type="match status" value="1"/>
</dbReference>
<dbReference type="PANTHER" id="PTHR11229:SF16">
    <property type="entry name" value="LARGE RIBOSOMAL SUBUNIT PROTEIN UL3C"/>
    <property type="match status" value="1"/>
</dbReference>
<dbReference type="Pfam" id="PF00297">
    <property type="entry name" value="Ribosomal_L3"/>
    <property type="match status" value="1"/>
</dbReference>
<dbReference type="SUPFAM" id="SSF50447">
    <property type="entry name" value="Translation proteins"/>
    <property type="match status" value="1"/>
</dbReference>
<dbReference type="PROSITE" id="PS00474">
    <property type="entry name" value="RIBOSOMAL_L3"/>
    <property type="match status" value="1"/>
</dbReference>
<gene>
    <name evidence="1" type="primary">rplC</name>
    <name type="ordered locus">MT0728</name>
</gene>
<protein>
    <recommendedName>
        <fullName evidence="1">Large ribosomal subunit protein uL3</fullName>
    </recommendedName>
    <alternativeName>
        <fullName evidence="2">50S ribosomal protein L3</fullName>
    </alternativeName>
</protein>
<feature type="chain" id="PRO_0000428230" description="Large ribosomal subunit protein uL3">
    <location>
        <begin position="1"/>
        <end position="217"/>
    </location>
</feature>
<name>RL3_MYCTO</name>
<accession>P9WH86</accession>
<accession>L0T4G4</accession>
<accession>O06044</accession>
<accession>P60442</accession>
<accession>P95049</accession>
<sequence>MARKGILGTKLGMTQVFDESNRVVPVTVVKAGPNVVTRIRTPERDGYSAVQLAYGEISPRKVNKPLTGQYTAAGVNPRRYLAELRLDDSDAATEYQVGQELTAEIFADGSYVDVTGTSKGKGFAGTMKRHGFRGQGASHGAQAVHRRPGSIGGCATPARVFKGTRMAGRMGNDRVTVLNLLVHKVDAENGVLLIKGAVPGRTGGLVMVRSAIKRGEK</sequence>
<organism>
    <name type="scientific">Mycobacterium tuberculosis (strain CDC 1551 / Oshkosh)</name>
    <dbReference type="NCBI Taxonomy" id="83331"/>
    <lineage>
        <taxon>Bacteria</taxon>
        <taxon>Bacillati</taxon>
        <taxon>Actinomycetota</taxon>
        <taxon>Actinomycetes</taxon>
        <taxon>Mycobacteriales</taxon>
        <taxon>Mycobacteriaceae</taxon>
        <taxon>Mycobacterium</taxon>
        <taxon>Mycobacterium tuberculosis complex</taxon>
    </lineage>
</organism>
<keyword id="KW-1185">Reference proteome</keyword>
<keyword id="KW-0687">Ribonucleoprotein</keyword>
<keyword id="KW-0689">Ribosomal protein</keyword>
<keyword id="KW-0694">RNA-binding</keyword>
<keyword id="KW-0699">rRNA-binding</keyword>